<protein>
    <recommendedName>
        <fullName>Myosin light chain 1, cardiac muscle</fullName>
    </recommendedName>
    <alternativeName>
        <fullName>Myosin light chain alkali 1</fullName>
        <shortName>Myosin light chain A1</shortName>
    </alternativeName>
</protein>
<name>MLEC_CHICK</name>
<evidence type="ECO:0000255" key="1">
    <source>
        <dbReference type="PROSITE-ProRule" id="PRU00448"/>
    </source>
</evidence>
<evidence type="ECO:0000256" key="2">
    <source>
        <dbReference type="SAM" id="MobiDB-lite"/>
    </source>
</evidence>
<evidence type="ECO:0000305" key="3"/>
<organism>
    <name type="scientific">Gallus gallus</name>
    <name type="common">Chicken</name>
    <dbReference type="NCBI Taxonomy" id="9031"/>
    <lineage>
        <taxon>Eukaryota</taxon>
        <taxon>Metazoa</taxon>
        <taxon>Chordata</taxon>
        <taxon>Craniata</taxon>
        <taxon>Vertebrata</taxon>
        <taxon>Euteleostomi</taxon>
        <taxon>Archelosauria</taxon>
        <taxon>Archosauria</taxon>
        <taxon>Dinosauria</taxon>
        <taxon>Saurischia</taxon>
        <taxon>Theropoda</taxon>
        <taxon>Coelurosauria</taxon>
        <taxon>Aves</taxon>
        <taxon>Neognathae</taxon>
        <taxon>Galloanserae</taxon>
        <taxon>Galliformes</taxon>
        <taxon>Phasianidae</taxon>
        <taxon>Phasianinae</taxon>
        <taxon>Gallus</taxon>
    </lineage>
</organism>
<proteinExistence type="evidence at protein level"/>
<accession>P02606</accession>
<dbReference type="EMBL" id="X13861">
    <property type="protein sequence ID" value="CAA32072.1"/>
    <property type="molecule type" value="mRNA"/>
</dbReference>
<dbReference type="EMBL" id="X13862">
    <property type="protein sequence ID" value="CAA32073.1"/>
    <property type="molecule type" value="mRNA"/>
</dbReference>
<dbReference type="EMBL" id="X13863">
    <property type="protein sequence ID" value="CAA32074.1"/>
    <property type="molecule type" value="Genomic_DNA"/>
</dbReference>
<dbReference type="EMBL" id="X13864">
    <property type="protein sequence ID" value="CAA32075.1"/>
    <property type="molecule type" value="Genomic_DNA"/>
</dbReference>
<dbReference type="EMBL" id="X13865">
    <property type="protein sequence ID" value="CAA32075.1"/>
    <property type="status" value="JOINED"/>
    <property type="molecule type" value="Genomic_DNA"/>
</dbReference>
<dbReference type="EMBL" id="X13866">
    <property type="protein sequence ID" value="CAA32075.1"/>
    <property type="status" value="JOINED"/>
    <property type="molecule type" value="Genomic_DNA"/>
</dbReference>
<dbReference type="EMBL" id="X13867">
    <property type="protein sequence ID" value="CAA32075.1"/>
    <property type="status" value="JOINED"/>
    <property type="molecule type" value="Genomic_DNA"/>
</dbReference>
<dbReference type="PIR" id="S01843">
    <property type="entry name" value="MOCHLC"/>
</dbReference>
<dbReference type="RefSeq" id="NP_990490.1">
    <property type="nucleotide sequence ID" value="NM_205159.1"/>
</dbReference>
<dbReference type="SMR" id="P02606"/>
<dbReference type="FunCoup" id="P02606">
    <property type="interactions" value="1405"/>
</dbReference>
<dbReference type="STRING" id="9031.ENSGALP00000043277"/>
<dbReference type="PaxDb" id="9031-ENSGALP00000043277"/>
<dbReference type="GeneID" id="396067"/>
<dbReference type="KEGG" id="gga:396067"/>
<dbReference type="CTD" id="4634"/>
<dbReference type="VEuPathDB" id="HostDB:geneid_396067"/>
<dbReference type="eggNOG" id="KOG0030">
    <property type="taxonomic scope" value="Eukaryota"/>
</dbReference>
<dbReference type="InParanoid" id="P02606"/>
<dbReference type="OrthoDB" id="5959761at2759"/>
<dbReference type="PhylomeDB" id="P02606"/>
<dbReference type="PRO" id="PR:P02606"/>
<dbReference type="Proteomes" id="UP000000539">
    <property type="component" value="Unassembled WGS sequence"/>
</dbReference>
<dbReference type="GO" id="GO:0016460">
    <property type="term" value="C:myosin II complex"/>
    <property type="evidence" value="ECO:0000318"/>
    <property type="project" value="GO_Central"/>
</dbReference>
<dbReference type="GO" id="GO:0005509">
    <property type="term" value="F:calcium ion binding"/>
    <property type="evidence" value="ECO:0007669"/>
    <property type="project" value="InterPro"/>
</dbReference>
<dbReference type="CDD" id="cd00051">
    <property type="entry name" value="EFh"/>
    <property type="match status" value="1"/>
</dbReference>
<dbReference type="FunFam" id="1.10.238.10:FF:000019">
    <property type="entry name" value="Myosin light chain 1 skeletal"/>
    <property type="match status" value="1"/>
</dbReference>
<dbReference type="FunFam" id="1.10.238.10:FF:000056">
    <property type="entry name" value="Myosin light chain 1 skeletal"/>
    <property type="match status" value="1"/>
</dbReference>
<dbReference type="Gene3D" id="1.10.238.10">
    <property type="entry name" value="EF-hand"/>
    <property type="match status" value="2"/>
</dbReference>
<dbReference type="InterPro" id="IPR050230">
    <property type="entry name" value="CALM/Myosin/TropC-like"/>
</dbReference>
<dbReference type="InterPro" id="IPR011992">
    <property type="entry name" value="EF-hand-dom_pair"/>
</dbReference>
<dbReference type="InterPro" id="IPR002048">
    <property type="entry name" value="EF_hand_dom"/>
</dbReference>
<dbReference type="PANTHER" id="PTHR23048">
    <property type="entry name" value="MYOSIN LIGHT CHAIN 1, 3"/>
    <property type="match status" value="1"/>
</dbReference>
<dbReference type="PANTHER" id="PTHR23048:SF2">
    <property type="entry name" value="MYOSIN LIGHT CHAIN 3"/>
    <property type="match status" value="1"/>
</dbReference>
<dbReference type="SUPFAM" id="SSF47473">
    <property type="entry name" value="EF-hand"/>
    <property type="match status" value="1"/>
</dbReference>
<dbReference type="PROSITE" id="PS50222">
    <property type="entry name" value="EF_HAND_2"/>
    <property type="match status" value="2"/>
</dbReference>
<reference key="1">
    <citation type="journal article" date="1988" name="J. Mol. Biol.">
        <title>Single chicken cardiac myosin alkali light-chain gene generates two different mRNAs by alternative splicing of a complex exon.</title>
        <authorList>
            <person name="Nakamura S."/>
            <person name="Nabeshima Y."/>
            <person name="Kobayashi H."/>
            <person name="Nabeshima Y."/>
            <person name="Nonomura Y."/>
            <person name="Fujii-Kuriyama Y."/>
        </authorList>
    </citation>
    <scope>NUCLEOTIDE SEQUENCE [GENOMIC DNA / MRNA]</scope>
    <source>
        <tissue>Heart ventricle</tissue>
    </source>
</reference>
<reference key="2">
    <citation type="journal article" date="1980" name="Eur. J. Biochem.">
        <title>Amino-acid sequence of the L-1 light chain of chicken cardiac-muscle myosin.</title>
        <authorList>
            <person name="Maita T."/>
            <person name="Umegane T."/>
            <person name="Kato Y."/>
            <person name="Matsuda G."/>
        </authorList>
    </citation>
    <scope>PROTEIN SEQUENCE OF 3-194</scope>
</reference>
<feature type="initiator methionine" description="Removed">
    <location>
        <position position="1"/>
    </location>
</feature>
<feature type="chain" id="PRO_0000198703" description="Myosin light chain 1, cardiac muscle">
    <location>
        <begin position="2"/>
        <end position="194"/>
    </location>
</feature>
<feature type="domain" description="EF-hand 1" evidence="1">
    <location>
        <begin position="48"/>
        <end position="85"/>
    </location>
</feature>
<feature type="domain" description="EF-hand 2" evidence="1">
    <location>
        <begin position="127"/>
        <end position="162"/>
    </location>
</feature>
<feature type="domain" description="EF-hand 3" evidence="3">
    <location>
        <begin position="162"/>
        <end position="194"/>
    </location>
</feature>
<feature type="region of interest" description="Disordered" evidence="2">
    <location>
        <begin position="1"/>
        <end position="39"/>
    </location>
</feature>
<feature type="compositionally biased region" description="Basic and acidic residues" evidence="2">
    <location>
        <begin position="1"/>
        <end position="35"/>
    </location>
</feature>
<feature type="modified residue" description="Blocked amino end (Pro)">
    <location>
        <position position="2"/>
    </location>
</feature>
<feature type="sequence conflict" description="In Ref. 2; AA sequence." evidence="3" ref="2">
    <original>N</original>
    <variation>D</variation>
    <location>
        <position position="144"/>
    </location>
</feature>
<feature type="sequence conflict" description="In Ref. 2; AA sequence." evidence="3" ref="2">
    <original>R</original>
    <variation>A</variation>
    <location>
        <position position="157"/>
    </location>
</feature>
<sequence length="194" mass="21996">MPPKKPEPKKAPEPKKEEPKPAPKPAEPEPKKEVEFNPASIKVEFTPDQIEEFKEAFSLFDRTPKSEMKITYAQCGDVLRALGQNPTQAEVMKVLGRPKQEEMNSKMIDFETFLPMLQHISKTKDTGTYEDFVEGLRVFDKEGNGTVMGAELRHVLRTLGERLTEEEVDKLMAGQEDANGCINYEAFVKHIMAN</sequence>
<keyword id="KW-0903">Direct protein sequencing</keyword>
<keyword id="KW-0505">Motor protein</keyword>
<keyword id="KW-0514">Muscle protein</keyword>
<keyword id="KW-0518">Myosin</keyword>
<keyword id="KW-1185">Reference proteome</keyword>
<keyword id="KW-0677">Repeat</keyword>
<comment type="subunit">
    <text>Myosin is a hexamer of 2 heavy chains and 4 light chains.</text>
</comment>